<accession>Q09G12</accession>
<comment type="subcellular location">
    <subcellularLocation>
        <location>Plastid</location>
        <location>Chloroplast</location>
    </subcellularLocation>
</comment>
<comment type="similarity">
    <text evidence="1">Belongs to the bacterial ribosomal protein bL36 family.</text>
</comment>
<organism>
    <name type="scientific">Platanus occidentalis</name>
    <name type="common">Sycamore</name>
    <name type="synonym">American plane tree</name>
    <dbReference type="NCBI Taxonomy" id="4403"/>
    <lineage>
        <taxon>Eukaryota</taxon>
        <taxon>Viridiplantae</taxon>
        <taxon>Streptophyta</taxon>
        <taxon>Embryophyta</taxon>
        <taxon>Tracheophyta</taxon>
        <taxon>Spermatophyta</taxon>
        <taxon>Magnoliopsida</taxon>
        <taxon>Proteales</taxon>
        <taxon>Platanaceae</taxon>
        <taxon>Platanus</taxon>
    </lineage>
</organism>
<evidence type="ECO:0000255" key="1">
    <source>
        <dbReference type="HAMAP-Rule" id="MF_00251"/>
    </source>
</evidence>
<evidence type="ECO:0000305" key="2"/>
<proteinExistence type="inferred from homology"/>
<feature type="chain" id="PRO_0000344779" description="Large ribosomal subunit protein bL36c">
    <location>
        <begin position="1"/>
        <end position="37"/>
    </location>
</feature>
<protein>
    <recommendedName>
        <fullName evidence="1">Large ribosomal subunit protein bL36c</fullName>
    </recommendedName>
    <alternativeName>
        <fullName evidence="2">50S ribosomal protein L36, chloroplastic</fullName>
    </alternativeName>
</protein>
<reference key="1">
    <citation type="journal article" date="2006" name="BMC Plant Biol.">
        <title>Rapid and accurate pyrosequencing of angiosperm plastid genomes.</title>
        <authorList>
            <person name="Moore M.J."/>
            <person name="Dhingra A."/>
            <person name="Soltis P.S."/>
            <person name="Shaw R."/>
            <person name="Farmerie W.G."/>
            <person name="Folta K.M."/>
            <person name="Soltis D.E."/>
        </authorList>
    </citation>
    <scope>NUCLEOTIDE SEQUENCE [LARGE SCALE GENOMIC DNA]</scope>
</reference>
<keyword id="KW-0150">Chloroplast</keyword>
<keyword id="KW-0934">Plastid</keyword>
<keyword id="KW-0687">Ribonucleoprotein</keyword>
<keyword id="KW-0689">Ribosomal protein</keyword>
<sequence>MKIRASVRKICEKCRLIRRRGRIIVICSNPRHKQRQG</sequence>
<gene>
    <name evidence="1" type="primary">rpl36</name>
</gene>
<dbReference type="EMBL" id="DQ923116">
    <property type="protein sequence ID" value="ABI49813.1"/>
    <property type="molecule type" value="Genomic_DNA"/>
</dbReference>
<dbReference type="RefSeq" id="YP_740599.1">
    <property type="nucleotide sequence ID" value="NC_008335.1"/>
</dbReference>
<dbReference type="SMR" id="Q09G12"/>
<dbReference type="GeneID" id="4271274"/>
<dbReference type="GO" id="GO:0009507">
    <property type="term" value="C:chloroplast"/>
    <property type="evidence" value="ECO:0007669"/>
    <property type="project" value="UniProtKB-SubCell"/>
</dbReference>
<dbReference type="GO" id="GO:1990904">
    <property type="term" value="C:ribonucleoprotein complex"/>
    <property type="evidence" value="ECO:0007669"/>
    <property type="project" value="UniProtKB-KW"/>
</dbReference>
<dbReference type="GO" id="GO:0005840">
    <property type="term" value="C:ribosome"/>
    <property type="evidence" value="ECO:0007669"/>
    <property type="project" value="UniProtKB-KW"/>
</dbReference>
<dbReference type="GO" id="GO:0003735">
    <property type="term" value="F:structural constituent of ribosome"/>
    <property type="evidence" value="ECO:0007669"/>
    <property type="project" value="InterPro"/>
</dbReference>
<dbReference type="GO" id="GO:0006412">
    <property type="term" value="P:translation"/>
    <property type="evidence" value="ECO:0007669"/>
    <property type="project" value="UniProtKB-UniRule"/>
</dbReference>
<dbReference type="HAMAP" id="MF_00251">
    <property type="entry name" value="Ribosomal_bL36"/>
    <property type="match status" value="1"/>
</dbReference>
<dbReference type="InterPro" id="IPR000473">
    <property type="entry name" value="Ribosomal_bL36"/>
</dbReference>
<dbReference type="InterPro" id="IPR035977">
    <property type="entry name" value="Ribosomal_bL36_sp"/>
</dbReference>
<dbReference type="NCBIfam" id="TIGR01022">
    <property type="entry name" value="rpmJ_bact"/>
    <property type="match status" value="1"/>
</dbReference>
<dbReference type="PANTHER" id="PTHR42888">
    <property type="entry name" value="50S RIBOSOMAL PROTEIN L36, CHLOROPLASTIC"/>
    <property type="match status" value="1"/>
</dbReference>
<dbReference type="PANTHER" id="PTHR42888:SF1">
    <property type="entry name" value="LARGE RIBOSOMAL SUBUNIT PROTEIN BL36C"/>
    <property type="match status" value="1"/>
</dbReference>
<dbReference type="Pfam" id="PF00444">
    <property type="entry name" value="Ribosomal_L36"/>
    <property type="match status" value="1"/>
</dbReference>
<dbReference type="SUPFAM" id="SSF57840">
    <property type="entry name" value="Ribosomal protein L36"/>
    <property type="match status" value="1"/>
</dbReference>
<dbReference type="PROSITE" id="PS00828">
    <property type="entry name" value="RIBOSOMAL_L36"/>
    <property type="match status" value="1"/>
</dbReference>
<name>RK36_PLAOC</name>
<geneLocation type="chloroplast"/>